<evidence type="ECO:0000250" key="1">
    <source>
        <dbReference type="UniProtKB" id="P58390"/>
    </source>
</evidence>
<evidence type="ECO:0000250" key="2">
    <source>
        <dbReference type="UniProtKB" id="Q9H2S1"/>
    </source>
</evidence>
<evidence type="ECO:0000255" key="3"/>
<evidence type="ECO:0000256" key="4">
    <source>
        <dbReference type="SAM" id="MobiDB-lite"/>
    </source>
</evidence>
<evidence type="ECO:0000269" key="5">
    <source>
    </source>
</evidence>
<evidence type="ECO:0000269" key="6">
    <source>
    </source>
</evidence>
<evidence type="ECO:0000269" key="7">
    <source>
    </source>
</evidence>
<evidence type="ECO:0000269" key="8">
    <source>
    </source>
</evidence>
<evidence type="ECO:0000269" key="9">
    <source>
    </source>
</evidence>
<evidence type="ECO:0000269" key="10">
    <source>
    </source>
</evidence>
<evidence type="ECO:0000305" key="11"/>
<evidence type="ECO:0000312" key="12">
    <source>
        <dbReference type="RGD" id="2963"/>
    </source>
</evidence>
<evidence type="ECO:0007744" key="13">
    <source>
        <dbReference type="PDB" id="1G4Y"/>
    </source>
</evidence>
<evidence type="ECO:0007744" key="14">
    <source>
    </source>
</evidence>
<evidence type="ECO:0007829" key="15">
    <source>
        <dbReference type="PDB" id="1KKD"/>
    </source>
</evidence>
<evidence type="ECO:0007829" key="16">
    <source>
        <dbReference type="PDB" id="2PNV"/>
    </source>
</evidence>
<evidence type="ECO:0007829" key="17">
    <source>
        <dbReference type="PDB" id="4J9Y"/>
    </source>
</evidence>
<evidence type="ECO:0007829" key="18">
    <source>
        <dbReference type="PDB" id="6CZQ"/>
    </source>
</evidence>
<organism>
    <name type="scientific">Rattus norvegicus</name>
    <name type="common">Rat</name>
    <dbReference type="NCBI Taxonomy" id="10116"/>
    <lineage>
        <taxon>Eukaryota</taxon>
        <taxon>Metazoa</taxon>
        <taxon>Chordata</taxon>
        <taxon>Craniata</taxon>
        <taxon>Vertebrata</taxon>
        <taxon>Euteleostomi</taxon>
        <taxon>Mammalia</taxon>
        <taxon>Eutheria</taxon>
        <taxon>Euarchontoglires</taxon>
        <taxon>Glires</taxon>
        <taxon>Rodentia</taxon>
        <taxon>Myomorpha</taxon>
        <taxon>Muroidea</taxon>
        <taxon>Muridae</taxon>
        <taxon>Murinae</taxon>
        <taxon>Rattus</taxon>
    </lineage>
</organism>
<sequence>MSSCRYNGGVMRPLSNLSSSRRNLHEMDSEAQPLQPPASVVGGGGGASSPSAAAAASSSAPEIVVSKPEHNNSNNLALYGTGGGGSTGGGGGGGGGGGGSGHGSSSGTKSSKKKNQNIGYKLGHRRALFEKRKRLSDYALIFGMFGIVVMVIETELSWGAYDKASLYSLALKCLISLSTIILLGLIIVYHAREIQLFMVDNGADDWRIAMTYERIFFICLEILVCAIHPIPGNYTFTWTARLAFSYAPSTTTADVDIILSIPMFLRLYLIARVMLLHSKLFTDASSRSIGALNKINFNTRFVMKTLMTICPGTVLLVFSISLWIIAAWTVRACERYHDQQDVTSNFLGAMWLISITFLSIGYGDMVPNTYCGKGVCLLTGIMGAGCTALVVAVVARKLELTKAEKHVHNFMMDTQLTKRVKNAAANVLRETWLIYKNTKLVKKIDHAKVRKHQRKFLQAIHQLRSVKMEQRKLNDQANTLVDLAKTQNIMYDMISDLNERSEDFEKRIVTLETKLETLIGSIHALPGLISQTIRQQQRDFIETQMENYDKHVTYNAERSRSSSRRRRSSSTAPPTSSESS</sequence>
<reference key="1">
    <citation type="journal article" date="1996" name="Science">
        <title>Small-conductance, calcium-activated potassium channels from mammalian brain.</title>
        <authorList>
            <person name="Koehler M."/>
            <person name="Hirschberg B."/>
            <person name="Bond C.T."/>
            <person name="Kinzie J.M."/>
            <person name="Marrion N.V."/>
            <person name="Maylie J."/>
            <person name="Adelman J.P."/>
        </authorList>
    </citation>
    <scope>NUCLEOTIDE SEQUENCE [MRNA]</scope>
    <scope>FUNCTION</scope>
    <scope>TRANSPORTER ACTIVITY</scope>
    <scope>ACTIVITY REGULATION</scope>
    <scope>TISSUE SPECIFICITY</scope>
    <source>
        <strain>Sprague-Dawley</strain>
        <tissue>Brain</tissue>
    </source>
</reference>
<reference key="2">
    <citation type="journal article" date="1998" name="Nature">
        <title>Mechanism of calcium gating in small-conductance calcium-activated potassium channels.</title>
        <authorList>
            <person name="Xia X.M."/>
            <person name="Fakler B."/>
            <person name="Rivard A.F."/>
            <person name="Wayman G."/>
            <person name="Johnson-Pais T."/>
            <person name="Keen J.E."/>
            <person name="Ishii T."/>
            <person name="Hirschberg B."/>
            <person name="Bond C.T."/>
            <person name="Lutsenko S."/>
            <person name="Maylie J."/>
            <person name="Adelman J.P."/>
        </authorList>
    </citation>
    <scope>FUNCTION</scope>
    <scope>TRANSPORTER ACTIVITY</scope>
    <scope>INTERACTION WITH CALMODULIN</scope>
</reference>
<reference key="3">
    <citation type="journal article" date="2001" name="Biophys. J.">
        <title>Inwardly rectifying current-voltage relationship of small-conductance Ca2+-activated K+ channels rendered by intracellular divalent cation blockade.</title>
        <authorList>
            <person name="Soh H."/>
            <person name="Park C.S."/>
        </authorList>
    </citation>
    <scope>FUNCTION</scope>
    <scope>TRANSPORTER ACTIVITY</scope>
</reference>
<reference key="4">
    <citation type="journal article" date="2006" name="Proc. Natl. Acad. Sci. U.S.A.">
        <title>Quantitative phosphoproteomics of vasopressin-sensitive renal cells: regulation of aquaporin-2 phosphorylation at two sites.</title>
        <authorList>
            <person name="Hoffert J.D."/>
            <person name="Pisitkun T."/>
            <person name="Wang G."/>
            <person name="Shen R.-F."/>
            <person name="Knepper M.A."/>
        </authorList>
    </citation>
    <scope>PHOSPHORYLATION [LARGE SCALE ANALYSIS] AT TYR-161</scope>
    <scope>IDENTIFICATION BY MASS SPECTROMETRY [LARGE SCALE ANALYSIS]</scope>
</reference>
<reference key="5">
    <citation type="journal article" date="2010" name="J. Biol. Chem.">
        <title>Allosteric block of KCa2 channels by apamin.</title>
        <authorList>
            <person name="Lamy C."/>
            <person name="Goodchild S.J."/>
            <person name="Weatherall K.L."/>
            <person name="Jane D.E."/>
            <person name="Liegeois J.F."/>
            <person name="Seutin V."/>
            <person name="Marrion N.V."/>
        </authorList>
    </citation>
    <scope>FUNCTION</scope>
    <scope>TRANSPORTER ACTIVITY</scope>
    <scope>ACTIVITY REGULATION</scope>
    <scope>MUTAGENESIS OF HIS-337; ASN-345 AND ASN-368</scope>
</reference>
<reference key="6">
    <citation type="journal article" date="2011" name="Proc. Natl. Acad. Sci. U.S.A.">
        <title>Electrostatic influences of charged inner pore residues on the conductance and gating of small conductance Ca2+ activated K+ channels.</title>
        <authorList>
            <person name="Li W."/>
            <person name="Aldrich R.W."/>
        </authorList>
    </citation>
    <scope>FUNCTION</scope>
    <scope>TRANSPORTER ACTIVITY</scope>
    <scope>MUTAGENESIS OF ARG-396; LYS-397 AND GLU-399</scope>
</reference>
<reference evidence="13" key="7">
    <citation type="journal article" date="2001" name="Nature">
        <title>Structure of the gating domain of a Ca2+-activated K+ channel complexed with Ca2+/calmodulin.</title>
        <authorList>
            <person name="Schumacher M.A."/>
            <person name="Rivard A.F."/>
            <person name="Bachinger H.P."/>
            <person name="Adelman J.P."/>
        </authorList>
    </citation>
    <scope>X-RAY CRYSTALLOGRAPHY (1.6 ANGSTROMS) OF 395-490 IN COMPLEX WITH CALMODULIN</scope>
    <scope>FUNCTION</scope>
    <scope>DOMAIN</scope>
    <scope>SUBUNIT</scope>
</reference>
<protein>
    <recommendedName>
        <fullName evidence="11">Small conductance calcium-activated potassium channel protein 2</fullName>
        <shortName>SK2</shortName>
        <shortName>SKCa 2</shortName>
        <shortName>SKCa2</shortName>
    </recommendedName>
    <alternativeName>
        <fullName>KCa2.2</fullName>
    </alternativeName>
</protein>
<gene>
    <name evidence="12" type="primary">Kcnn2</name>
</gene>
<comment type="function">
    <text evidence="2 5 6 7 8 9 10">Small conductance calcium-activated potassium channel that mediates the voltage-independent transmembrane transfer of potassium across the cell membrane through a constitutive interaction with calmodulin which binds the intracellular calcium allowing its opening (PubMed:11325723, PubMed:20562108, PubMed:21422289, PubMed:8781233, PubMed:9774106). The current is characterized by a voltage-independent activation, an intracellular calcium concentration increase-dependent activation and a single-channel conductance of about 3 picosiemens (PubMed:8781233, PubMed:9774106). Also presents an inwardly rectifying current, thus reducing its already small outward conductance of potassium ions, which is particularly the case when the membrane potential displays positive values, above + 20 mV (PubMed:8781233, PubMed:9774106). The inward rectification could be due to a blockade of the outward current by intracellular divalent cations such as calcium and magnesium and could also be due to an intrinsic property of the channel pore, independent of intracellular divalent ions (PubMed:11325723, PubMed:21422289). There are three positively charged amino acids in the S6 transmembrane domain, close to the pore, that collectively control the conductance and rectification through an electrostatic mechanism (PubMed:21422289). Additionally, electrostatic contributions from these residues also play an important role in determining the intrinsic open probability of the channel in the absence of calcium, affecting the apparent calcium affinity for activation (PubMed:21422289). Forms an heteromeric complex with calmodulin, which is constitutively associated in a calcium-independent manner (PubMed:9774106). Channel opening is triggered when calcium binds the calmodulin resulting in a rotary movement leading to the formation of the dimeric complex to open the gate (PubMed:11323678, PubMed:9774106). Plays a role in the repolarization phase of cardiac action potential (By similarity).</text>
</comment>
<comment type="catalytic activity">
    <reaction evidence="6 7 8 9 10">
        <text>K(+)(in) = K(+)(out)</text>
        <dbReference type="Rhea" id="RHEA:29463"/>
        <dbReference type="ChEBI" id="CHEBI:29103"/>
    </reaction>
</comment>
<comment type="activity regulation">
    <text evidence="7 9">Inhibited by bee venom neurotoxin apamin (PubMed:20562108, PubMed:8781233). Inhibited by UCL 1684 and tetraethylammonium (TEA) (PubMed:20562108).</text>
</comment>
<comment type="subunit">
    <text evidence="1 5 10">Homodimer (By similarity). Heteromultimer with KCNN1 and KCNN3 (By similarity). The complex is composed of 4 channel subunits each of which binds to a calmodulin subunit which regulates the channel activity through calcium-binding (PubMed:11323678, PubMed:9774106). Interacts (via N-terminal domain) with MPP2 (By similarity).</text>
</comment>
<comment type="interaction">
    <interactant intactId="EBI-1031103">
        <id>P70604</id>
    </interactant>
    <interactant intactId="EBI-397530">
        <id>P62161</id>
        <label>Calm3</label>
    </interactant>
    <organismsDiffer>false</organismsDiffer>
    <experiments>6</experiments>
</comment>
<comment type="subcellular location">
    <subcellularLocation>
        <location evidence="3">Membrane</location>
        <topology evidence="3">Multi-pass membrane protein</topology>
    </subcellularLocation>
    <subcellularLocation>
        <location evidence="1">Cytoplasm</location>
        <location evidence="1">Myofibril</location>
        <location evidence="1">Sarcomere</location>
        <location evidence="1">Z line</location>
    </subcellularLocation>
</comment>
<comment type="tissue specificity">
    <text evidence="9">Brain.</text>
</comment>
<comment type="domain">
    <text evidence="5">The calmodulin-binding domain (CaMBD) forms an elongated dimer with a calmodulin molecule bound at each end; each calmodulin wraps around three alpha-helices, two from one CaMBD subunit and one from the other.</text>
</comment>
<comment type="domain">
    <text evidence="2">The coiled-coil domaim mediates heteromeic assembly.</text>
</comment>
<comment type="similarity">
    <text evidence="11">Belongs to the potassium channel KCNN family. KCa2.2/KCNN2 subfamily.</text>
</comment>
<accession>P70604</accession>
<name>KCNN2_RAT</name>
<feature type="chain" id="PRO_0000155012" description="Small conductance calcium-activated potassium channel protein 2">
    <location>
        <begin position="1"/>
        <end position="580"/>
    </location>
</feature>
<feature type="transmembrane region" description="Helical; Name=Segment S1" evidence="3">
    <location>
        <begin position="140"/>
        <end position="160"/>
    </location>
</feature>
<feature type="transmembrane region" description="Helical; Name=Segment S2" evidence="3">
    <location>
        <begin position="169"/>
        <end position="189"/>
    </location>
</feature>
<feature type="transmembrane region" description="Helical; Name=Segment S3" evidence="3">
    <location>
        <begin position="215"/>
        <end position="235"/>
    </location>
</feature>
<feature type="transmembrane region" description="Helical; Name=Segment S4" evidence="3">
    <location>
        <begin position="257"/>
        <end position="277"/>
    </location>
</feature>
<feature type="transmembrane region" description="Helical; Name=Segment S5" evidence="3">
    <location>
        <begin position="306"/>
        <end position="326"/>
    </location>
</feature>
<feature type="intramembrane region" description="Pore-forming; Name=Segment H5" evidence="3">
    <location>
        <begin position="346"/>
        <end position="366"/>
    </location>
</feature>
<feature type="transmembrane region" description="Helical; Name=Segment S6" evidence="3">
    <location>
        <begin position="375"/>
        <end position="395"/>
    </location>
</feature>
<feature type="region of interest" description="Disordered" evidence="4">
    <location>
        <begin position="1"/>
        <end position="68"/>
    </location>
</feature>
<feature type="region of interest" description="Disordered" evidence="4">
    <location>
        <begin position="88"/>
        <end position="116"/>
    </location>
</feature>
<feature type="region of interest" description="Calmodulin-binding" evidence="5">
    <location>
        <begin position="413"/>
        <end position="489"/>
    </location>
</feature>
<feature type="region of interest" description="Disordered" evidence="4">
    <location>
        <begin position="551"/>
        <end position="580"/>
    </location>
</feature>
<feature type="compositionally biased region" description="Low complexity" evidence="4">
    <location>
        <begin position="48"/>
        <end position="61"/>
    </location>
</feature>
<feature type="compositionally biased region" description="Gly residues" evidence="4">
    <location>
        <begin position="88"/>
        <end position="104"/>
    </location>
</feature>
<feature type="compositionally biased region" description="Basic and acidic residues" evidence="4">
    <location>
        <begin position="551"/>
        <end position="560"/>
    </location>
</feature>
<feature type="compositionally biased region" description="Low complexity" evidence="4">
    <location>
        <begin position="569"/>
        <end position="580"/>
    </location>
</feature>
<feature type="modified residue" description="Phosphotyrosine" evidence="14">
    <location>
        <position position="161"/>
    </location>
</feature>
<feature type="mutagenesis site" description="Loss of inhibition by apamin and the organic molecule blockers UCL 1684 and d-tubocurarine. No effect on inhibition by tetraethylammonium (TEA)." evidence="7">
    <original>H</original>
    <variation>N</variation>
    <location>
        <position position="337"/>
    </location>
</feature>
<feature type="mutagenesis site" description="Reduced inhibition by apamin but binding to apamin is unaffected." evidence="7">
    <original>N</original>
    <variation>G</variation>
    <location>
        <position position="345"/>
    </location>
</feature>
<feature type="mutagenesis site" description="Reduced inhibition by apamin but binding to apamin is unaffected." evidence="7">
    <original>N</original>
    <variation>H</variation>
    <location>
        <position position="368"/>
    </location>
</feature>
<feature type="mutagenesis site" description="Mostly eliminates inward rectifier potassium channel activity. Loss of inward rectifier potassium channel activity; when associated with E-397. Significantly increases outward single-channel conductance at positive potentials. Significantly increases outward single-channel conductance at positive potentials; when associated with E-397. Increases inward rectifier potassium channel activity. Does not affect inward rectifier potassium channel activity; when associated with R-399. Decreases inward rectifier potassium channel activity; when associated with E-397 and R-399. Significantly increases apparent calcium affinity. Five-fold increases in the apparent calcium affinity; when associated with E.397. Highly increases apparent calcium affinity; when associated with E-397 and R-399." evidence="8">
    <original>R</original>
    <variation>E</variation>
    <location>
        <position position="396"/>
    </location>
</feature>
<feature type="mutagenesis site" description="Does not affect inward rectifier potassium channel activity. Does not affect apparent calcium affinity." evidence="8">
    <original>R</original>
    <variation>K</variation>
    <location>
        <position position="396"/>
    </location>
</feature>
<feature type="mutagenesis site" description="Highly decreases inward rectifier potassium channel activity; when associated with N-397. Slightly decreases apparent calcium affinity." evidence="8">
    <original>R</original>
    <variation>N</variation>
    <location>
        <position position="396"/>
    </location>
</feature>
<feature type="mutagenesis site" description="Moderately reduces inward rectifier potassium channel activity. Loss of inward rectifier potassium channel activity; when associated with E-396. Significantly increases outward single-channel conductance at positive potentials; when associated with E-396. Decreases inward rectifier potassium channel activity; when associated with E-396 and R-399. Highly increases apparent calcium affinity; when associated with E-396 and R-399." evidence="8">
    <original>K</original>
    <variation>E</variation>
    <location>
        <position position="397"/>
    </location>
</feature>
<feature type="mutagenesis site" description="Highly decreases inward rectifier potassium channel activity; when associated with N-396." evidence="8">
    <original>K</original>
    <variation>N</variation>
    <location>
        <position position="397"/>
    </location>
</feature>
<feature type="mutagenesis site" description="Increases inward rectifier potassium channel activity. Does not affect inward rectifier potassium channel activity; when associated with E-396. Decreases inward rectifier potassium channel activity; when associated with E-396 and E-397. Highly increases apparent calcium affinity; when associated with E-396 and E-397." evidence="8">
    <original>E</original>
    <variation>R</variation>
    <location>
        <position position="399"/>
    </location>
</feature>
<feature type="strand" evidence="15">
    <location>
        <begin position="398"/>
        <end position="401"/>
    </location>
</feature>
<feature type="helix" evidence="17">
    <location>
        <begin position="414"/>
        <end position="439"/>
    </location>
</feature>
<feature type="strand" evidence="18">
    <location>
        <begin position="440"/>
        <end position="443"/>
    </location>
</feature>
<feature type="helix" evidence="17">
    <location>
        <begin position="446"/>
        <end position="485"/>
    </location>
</feature>
<feature type="helix" evidence="16">
    <location>
        <begin position="489"/>
        <end position="523"/>
    </location>
</feature>
<proteinExistence type="evidence at protein level"/>
<keyword id="KW-0002">3D-structure</keyword>
<keyword id="KW-0112">Calmodulin-binding</keyword>
<keyword id="KW-0963">Cytoplasm</keyword>
<keyword id="KW-0407">Ion channel</keyword>
<keyword id="KW-0406">Ion transport</keyword>
<keyword id="KW-0472">Membrane</keyword>
<keyword id="KW-0597">Phosphoprotein</keyword>
<keyword id="KW-1185">Reference proteome</keyword>
<keyword id="KW-0812">Transmembrane</keyword>
<keyword id="KW-1133">Transmembrane helix</keyword>
<keyword id="KW-0813">Transport</keyword>
<dbReference type="EMBL" id="U69882">
    <property type="protein sequence ID" value="AAB09563.1"/>
    <property type="molecule type" value="mRNA"/>
</dbReference>
<dbReference type="RefSeq" id="NP_062187.1">
    <property type="nucleotide sequence ID" value="NM_019314.2"/>
</dbReference>
<dbReference type="PDB" id="1G4Y">
    <property type="method" value="X-ray"/>
    <property type="resolution" value="1.60 A"/>
    <property type="chains" value="B=396-487"/>
</dbReference>
<dbReference type="PDB" id="1KKD">
    <property type="method" value="NMR"/>
    <property type="chains" value="A=396-487"/>
</dbReference>
<dbReference type="PDB" id="1QX7">
    <property type="method" value="X-ray"/>
    <property type="resolution" value="3.09 A"/>
    <property type="chains" value="D=411-487"/>
</dbReference>
<dbReference type="PDB" id="2PNV">
    <property type="method" value="X-ray"/>
    <property type="resolution" value="2.10 A"/>
    <property type="chains" value="A/B=488-526"/>
</dbReference>
<dbReference type="PDB" id="3SJQ">
    <property type="method" value="X-ray"/>
    <property type="resolution" value="1.90 A"/>
    <property type="chains" value="C/D=412-487"/>
</dbReference>
<dbReference type="PDB" id="4G27">
    <property type="method" value="X-ray"/>
    <property type="resolution" value="1.65 A"/>
    <property type="chains" value="B=396-487"/>
</dbReference>
<dbReference type="PDB" id="4G28">
    <property type="method" value="X-ray"/>
    <property type="resolution" value="1.63 A"/>
    <property type="chains" value="B=396-487"/>
</dbReference>
<dbReference type="PDB" id="4J9Y">
    <property type="method" value="X-ray"/>
    <property type="resolution" value="1.51 A"/>
    <property type="chains" value="B=396-487"/>
</dbReference>
<dbReference type="PDB" id="4J9Z">
    <property type="method" value="X-ray"/>
    <property type="resolution" value="1.66 A"/>
    <property type="chains" value="B=396-487"/>
</dbReference>
<dbReference type="PDB" id="4QNH">
    <property type="method" value="X-ray"/>
    <property type="resolution" value="2.02 A"/>
    <property type="chains" value="B=396-487"/>
</dbReference>
<dbReference type="PDB" id="6CZQ">
    <property type="method" value="X-ray"/>
    <property type="resolution" value="2.20 A"/>
    <property type="chains" value="B=395-487"/>
</dbReference>
<dbReference type="PDBsum" id="1G4Y"/>
<dbReference type="PDBsum" id="1KKD"/>
<dbReference type="PDBsum" id="1QX7"/>
<dbReference type="PDBsum" id="2PNV"/>
<dbReference type="PDBsum" id="3SJQ"/>
<dbReference type="PDBsum" id="4G27"/>
<dbReference type="PDBsum" id="4G28"/>
<dbReference type="PDBsum" id="4J9Y"/>
<dbReference type="PDBsum" id="4J9Z"/>
<dbReference type="PDBsum" id="4QNH"/>
<dbReference type="PDBsum" id="6CZQ"/>
<dbReference type="BMRB" id="P70604"/>
<dbReference type="SMR" id="P70604"/>
<dbReference type="DIP" id="DIP-35337N"/>
<dbReference type="FunCoup" id="P70604">
    <property type="interactions" value="1384"/>
</dbReference>
<dbReference type="IntAct" id="P70604">
    <property type="interactions" value="1"/>
</dbReference>
<dbReference type="MINT" id="P70604"/>
<dbReference type="STRING" id="10116.ENSRNOP00000060708"/>
<dbReference type="BindingDB" id="P70604"/>
<dbReference type="ChEMBL" id="CHEMBL2547"/>
<dbReference type="DrugCentral" id="P70604"/>
<dbReference type="GuidetoPHARMACOLOGY" id="382"/>
<dbReference type="iPTMnet" id="P70604"/>
<dbReference type="PhosphoSitePlus" id="P70604"/>
<dbReference type="PaxDb" id="10116-ENSRNOP00000060708"/>
<dbReference type="ABCD" id="P70604">
    <property type="antibodies" value="1 sequenced antibody"/>
</dbReference>
<dbReference type="GeneID" id="54262"/>
<dbReference type="KEGG" id="rno:54262"/>
<dbReference type="UCSC" id="RGD:2963">
    <property type="organism name" value="rat"/>
</dbReference>
<dbReference type="AGR" id="RGD:2963"/>
<dbReference type="CTD" id="3781"/>
<dbReference type="RGD" id="2963">
    <property type="gene designation" value="Kcnn2"/>
</dbReference>
<dbReference type="VEuPathDB" id="HostDB:ENSRNOG00000016675"/>
<dbReference type="eggNOG" id="KOG3684">
    <property type="taxonomic scope" value="Eukaryota"/>
</dbReference>
<dbReference type="HOGENOM" id="CLU_014617_0_1_1"/>
<dbReference type="InParanoid" id="P70604"/>
<dbReference type="PhylomeDB" id="P70604"/>
<dbReference type="TreeFam" id="TF315015"/>
<dbReference type="Reactome" id="R-RNO-1296052">
    <property type="pathway name" value="Ca2+ activated K+ channels"/>
</dbReference>
<dbReference type="EvolutionaryTrace" id="P70604"/>
<dbReference type="PRO" id="PR:P70604"/>
<dbReference type="Proteomes" id="UP000002494">
    <property type="component" value="Chromosome 18"/>
</dbReference>
<dbReference type="Bgee" id="ENSRNOG00000016675">
    <property type="expression patterns" value="Expressed in frontal cortex and 15 other cell types or tissues"/>
</dbReference>
<dbReference type="ExpressionAtlas" id="P70604">
    <property type="expression patterns" value="baseline and differential"/>
</dbReference>
<dbReference type="GO" id="GO:0009986">
    <property type="term" value="C:cell surface"/>
    <property type="evidence" value="ECO:0000266"/>
    <property type="project" value="RGD"/>
</dbReference>
<dbReference type="GO" id="GO:0043197">
    <property type="term" value="C:dendritic spine"/>
    <property type="evidence" value="ECO:0000314"/>
    <property type="project" value="RGD"/>
</dbReference>
<dbReference type="GO" id="GO:0098978">
    <property type="term" value="C:glutamatergic synapse"/>
    <property type="evidence" value="ECO:0000266"/>
    <property type="project" value="RGD"/>
</dbReference>
<dbReference type="GO" id="GO:0016020">
    <property type="term" value="C:membrane"/>
    <property type="evidence" value="ECO:0000314"/>
    <property type="project" value="UniProtKB"/>
</dbReference>
<dbReference type="GO" id="GO:0043025">
    <property type="term" value="C:neuronal cell body"/>
    <property type="evidence" value="ECO:0000314"/>
    <property type="project" value="RGD"/>
</dbReference>
<dbReference type="GO" id="GO:0005886">
    <property type="term" value="C:plasma membrane"/>
    <property type="evidence" value="ECO:0000250"/>
    <property type="project" value="UniProtKB"/>
</dbReference>
<dbReference type="GO" id="GO:0045211">
    <property type="term" value="C:postsynaptic membrane"/>
    <property type="evidence" value="ECO:0000266"/>
    <property type="project" value="RGD"/>
</dbReference>
<dbReference type="GO" id="GO:0042383">
    <property type="term" value="C:sarcolemma"/>
    <property type="evidence" value="ECO:0000266"/>
    <property type="project" value="RGD"/>
</dbReference>
<dbReference type="GO" id="GO:0005790">
    <property type="term" value="C:smooth endoplasmic reticulum"/>
    <property type="evidence" value="ECO:0000266"/>
    <property type="project" value="RGD"/>
</dbReference>
<dbReference type="GO" id="GO:0030315">
    <property type="term" value="C:T-tubule"/>
    <property type="evidence" value="ECO:0000266"/>
    <property type="project" value="RGD"/>
</dbReference>
<dbReference type="GO" id="GO:0030018">
    <property type="term" value="C:Z disc"/>
    <property type="evidence" value="ECO:0000266"/>
    <property type="project" value="RGD"/>
</dbReference>
<dbReference type="GO" id="GO:0051393">
    <property type="term" value="F:alpha-actinin binding"/>
    <property type="evidence" value="ECO:0000266"/>
    <property type="project" value="RGD"/>
</dbReference>
<dbReference type="GO" id="GO:0015269">
    <property type="term" value="F:calcium-activated potassium channel activity"/>
    <property type="evidence" value="ECO:0000266"/>
    <property type="project" value="RGD"/>
</dbReference>
<dbReference type="GO" id="GO:0005516">
    <property type="term" value="F:calmodulin binding"/>
    <property type="evidence" value="ECO:0000314"/>
    <property type="project" value="UniProtKB"/>
</dbReference>
<dbReference type="GO" id="GO:0005242">
    <property type="term" value="F:inward rectifier potassium channel activity"/>
    <property type="evidence" value="ECO:0000266"/>
    <property type="project" value="RGD"/>
</dbReference>
<dbReference type="GO" id="GO:0019904">
    <property type="term" value="F:protein domain specific binding"/>
    <property type="evidence" value="ECO:0000266"/>
    <property type="project" value="RGD"/>
</dbReference>
<dbReference type="GO" id="GO:0042803">
    <property type="term" value="F:protein homodimerization activity"/>
    <property type="evidence" value="ECO:0000266"/>
    <property type="project" value="RGD"/>
</dbReference>
<dbReference type="GO" id="GO:0016286">
    <property type="term" value="F:small conductance calcium-activated potassium channel activity"/>
    <property type="evidence" value="ECO:0000314"/>
    <property type="project" value="UniProtKB"/>
</dbReference>
<dbReference type="GO" id="GO:0098914">
    <property type="term" value="P:membrane repolarization during atrial cardiac muscle cell action potential"/>
    <property type="evidence" value="ECO:0000266"/>
    <property type="project" value="RGD"/>
</dbReference>
<dbReference type="GO" id="GO:0050804">
    <property type="term" value="P:modulation of chemical synaptic transmission"/>
    <property type="evidence" value="ECO:0000266"/>
    <property type="project" value="RGD"/>
</dbReference>
<dbReference type="GO" id="GO:0043268">
    <property type="term" value="P:positive regulation of potassium ion transport"/>
    <property type="evidence" value="ECO:0000315"/>
    <property type="project" value="RGD"/>
</dbReference>
<dbReference type="GO" id="GO:0071805">
    <property type="term" value="P:potassium ion transmembrane transport"/>
    <property type="evidence" value="ECO:0000266"/>
    <property type="project" value="RGD"/>
</dbReference>
<dbReference type="GO" id="GO:0006813">
    <property type="term" value="P:potassium ion transport"/>
    <property type="evidence" value="ECO:0000314"/>
    <property type="project" value="UniProtKB"/>
</dbReference>
<dbReference type="GO" id="GO:0048168">
    <property type="term" value="P:regulation of neuronal synaptic plasticity"/>
    <property type="evidence" value="ECO:0000315"/>
    <property type="project" value="RGD"/>
</dbReference>
<dbReference type="GO" id="GO:1901379">
    <property type="term" value="P:regulation of potassium ion transmembrane transport"/>
    <property type="evidence" value="ECO:0000266"/>
    <property type="project" value="RGD"/>
</dbReference>
<dbReference type="DisProt" id="DP01141"/>
<dbReference type="FunFam" id="1.10.287.70:FF:000022">
    <property type="entry name" value="Small conductance calcium-activated potassium channel, isoform O"/>
    <property type="match status" value="1"/>
</dbReference>
<dbReference type="FunFam" id="1.10.287.70:FF:000027">
    <property type="entry name" value="Small conductance calcium-activated potassium channel, isoform O"/>
    <property type="match status" value="1"/>
</dbReference>
<dbReference type="Gene3D" id="1.10.287.70">
    <property type="match status" value="2"/>
</dbReference>
<dbReference type="InterPro" id="IPR004178">
    <property type="entry name" value="CaM-bd_dom"/>
</dbReference>
<dbReference type="InterPro" id="IPR036122">
    <property type="entry name" value="CaM-bd_dom_sf"/>
</dbReference>
<dbReference type="InterPro" id="IPR015449">
    <property type="entry name" value="K_chnl_Ca-activ_SK"/>
</dbReference>
<dbReference type="InterPro" id="IPR013099">
    <property type="entry name" value="K_chnl_dom"/>
</dbReference>
<dbReference type="PANTHER" id="PTHR10153">
    <property type="entry name" value="SMALL CONDUCTANCE CALCIUM-ACTIVATED POTASSIUM CHANNEL"/>
    <property type="match status" value="1"/>
</dbReference>
<dbReference type="Pfam" id="PF02888">
    <property type="entry name" value="CaMBD"/>
    <property type="match status" value="1"/>
</dbReference>
<dbReference type="Pfam" id="PF07885">
    <property type="entry name" value="Ion_trans_2"/>
    <property type="match status" value="1"/>
</dbReference>
<dbReference type="Pfam" id="PF03530">
    <property type="entry name" value="SK_channel"/>
    <property type="match status" value="1"/>
</dbReference>
<dbReference type="PRINTS" id="PR01451">
    <property type="entry name" value="SKCHANNEL"/>
</dbReference>
<dbReference type="SMART" id="SM01053">
    <property type="entry name" value="CaMBD"/>
    <property type="match status" value="1"/>
</dbReference>
<dbReference type="SUPFAM" id="SSF81327">
    <property type="entry name" value="Small-conductance potassium channel"/>
    <property type="match status" value="1"/>
</dbReference>
<dbReference type="SUPFAM" id="SSF81324">
    <property type="entry name" value="Voltage-gated potassium channels"/>
    <property type="match status" value="1"/>
</dbReference>